<organism>
    <name type="scientific">Escherichia coli O1:K1 / APEC</name>
    <dbReference type="NCBI Taxonomy" id="405955"/>
    <lineage>
        <taxon>Bacteria</taxon>
        <taxon>Pseudomonadati</taxon>
        <taxon>Pseudomonadota</taxon>
        <taxon>Gammaproteobacteria</taxon>
        <taxon>Enterobacterales</taxon>
        <taxon>Enterobacteriaceae</taxon>
        <taxon>Escherichia</taxon>
    </lineage>
</organism>
<name>AROD_ECOK1</name>
<protein>
    <recommendedName>
        <fullName evidence="1">3-dehydroquinate dehydratase</fullName>
        <shortName evidence="1">3-dehydroquinase</shortName>
        <ecNumber evidence="1">4.2.1.10</ecNumber>
    </recommendedName>
    <alternativeName>
        <fullName evidence="1">Type I DHQase</fullName>
    </alternativeName>
    <alternativeName>
        <fullName evidence="1">Type I dehydroquinase</fullName>
        <shortName evidence="1">DHQ1</shortName>
    </alternativeName>
</protein>
<accession>A1ABN0</accession>
<dbReference type="EC" id="4.2.1.10" evidence="1"/>
<dbReference type="EMBL" id="CP000468">
    <property type="protein sequence ID" value="ABJ01070.1"/>
    <property type="molecule type" value="Genomic_DNA"/>
</dbReference>
<dbReference type="RefSeq" id="WP_000860194.1">
    <property type="nucleotide sequence ID" value="NZ_CADILS010000002.1"/>
</dbReference>
<dbReference type="SMR" id="A1ABN0"/>
<dbReference type="KEGG" id="ecv:APECO1_769"/>
<dbReference type="HOGENOM" id="CLU_064444_0_0_6"/>
<dbReference type="UniPathway" id="UPA00053">
    <property type="reaction ID" value="UER00086"/>
</dbReference>
<dbReference type="Proteomes" id="UP000008216">
    <property type="component" value="Chromosome"/>
</dbReference>
<dbReference type="GO" id="GO:0003855">
    <property type="term" value="F:3-dehydroquinate dehydratase activity"/>
    <property type="evidence" value="ECO:0007669"/>
    <property type="project" value="UniProtKB-UniRule"/>
</dbReference>
<dbReference type="GO" id="GO:0046279">
    <property type="term" value="P:3,4-dihydroxybenzoate biosynthetic process"/>
    <property type="evidence" value="ECO:0007669"/>
    <property type="project" value="TreeGrafter"/>
</dbReference>
<dbReference type="GO" id="GO:0008652">
    <property type="term" value="P:amino acid biosynthetic process"/>
    <property type="evidence" value="ECO:0007669"/>
    <property type="project" value="UniProtKB-KW"/>
</dbReference>
<dbReference type="GO" id="GO:0009073">
    <property type="term" value="P:aromatic amino acid family biosynthetic process"/>
    <property type="evidence" value="ECO:0007669"/>
    <property type="project" value="UniProtKB-KW"/>
</dbReference>
<dbReference type="GO" id="GO:0009423">
    <property type="term" value="P:chorismate biosynthetic process"/>
    <property type="evidence" value="ECO:0007669"/>
    <property type="project" value="UniProtKB-UniRule"/>
</dbReference>
<dbReference type="CDD" id="cd00502">
    <property type="entry name" value="DHQase_I"/>
    <property type="match status" value="1"/>
</dbReference>
<dbReference type="FunFam" id="3.20.20.70:FF:000047">
    <property type="entry name" value="3-dehydroquinate dehydratase"/>
    <property type="match status" value="1"/>
</dbReference>
<dbReference type="Gene3D" id="3.20.20.70">
    <property type="entry name" value="Aldolase class I"/>
    <property type="match status" value="1"/>
</dbReference>
<dbReference type="HAMAP" id="MF_00214">
    <property type="entry name" value="AroD"/>
    <property type="match status" value="1"/>
</dbReference>
<dbReference type="InterPro" id="IPR018508">
    <property type="entry name" value="3-dehydroquinate_DH_AS"/>
</dbReference>
<dbReference type="InterPro" id="IPR013785">
    <property type="entry name" value="Aldolase_TIM"/>
</dbReference>
<dbReference type="InterPro" id="IPR001381">
    <property type="entry name" value="DHquinase_I"/>
</dbReference>
<dbReference type="InterPro" id="IPR050146">
    <property type="entry name" value="Type-I_3-dehydroquinase"/>
</dbReference>
<dbReference type="NCBIfam" id="TIGR01093">
    <property type="entry name" value="aroD"/>
    <property type="match status" value="1"/>
</dbReference>
<dbReference type="PANTHER" id="PTHR43699">
    <property type="entry name" value="3-DEHYDROQUINATE DEHYDRATASE"/>
    <property type="match status" value="1"/>
</dbReference>
<dbReference type="PANTHER" id="PTHR43699:SF1">
    <property type="entry name" value="3-DEHYDROQUINATE DEHYDRATASE"/>
    <property type="match status" value="1"/>
</dbReference>
<dbReference type="Pfam" id="PF01487">
    <property type="entry name" value="DHquinase_I"/>
    <property type="match status" value="1"/>
</dbReference>
<dbReference type="SUPFAM" id="SSF51569">
    <property type="entry name" value="Aldolase"/>
    <property type="match status" value="1"/>
</dbReference>
<dbReference type="PROSITE" id="PS01028">
    <property type="entry name" value="DEHYDROQUINASE_I"/>
    <property type="match status" value="1"/>
</dbReference>
<gene>
    <name evidence="1" type="primary">aroD</name>
    <name type="ordered locus">Ecok1_15760</name>
    <name type="ORF">APECO1_769</name>
</gene>
<keyword id="KW-0028">Amino-acid biosynthesis</keyword>
<keyword id="KW-0057">Aromatic amino acid biosynthesis</keyword>
<keyword id="KW-0456">Lyase</keyword>
<keyword id="KW-1185">Reference proteome</keyword>
<keyword id="KW-0704">Schiff base</keyword>
<feature type="chain" id="PRO_1000043163" description="3-dehydroquinate dehydratase">
    <location>
        <begin position="1"/>
        <end position="252"/>
    </location>
</feature>
<feature type="active site" description="Proton donor/acceptor" evidence="1">
    <location>
        <position position="143"/>
    </location>
</feature>
<feature type="active site" description="Schiff-base intermediate with substrate" evidence="1">
    <location>
        <position position="170"/>
    </location>
</feature>
<feature type="binding site" evidence="1">
    <location>
        <position position="21"/>
    </location>
    <ligand>
        <name>3-dehydroquinate</name>
        <dbReference type="ChEBI" id="CHEBI:32364"/>
    </ligand>
</feature>
<feature type="binding site" evidence="1">
    <location>
        <begin position="46"/>
        <end position="48"/>
    </location>
    <ligand>
        <name>3-dehydroquinate</name>
        <dbReference type="ChEBI" id="CHEBI:32364"/>
    </ligand>
</feature>
<feature type="binding site" evidence="1">
    <location>
        <position position="82"/>
    </location>
    <ligand>
        <name>3-dehydroquinate</name>
        <dbReference type="ChEBI" id="CHEBI:32364"/>
    </ligand>
</feature>
<feature type="binding site" evidence="1">
    <location>
        <position position="213"/>
    </location>
    <ligand>
        <name>3-dehydroquinate</name>
        <dbReference type="ChEBI" id="CHEBI:32364"/>
    </ligand>
</feature>
<feature type="binding site" evidence="1">
    <location>
        <position position="232"/>
    </location>
    <ligand>
        <name>3-dehydroquinate</name>
        <dbReference type="ChEBI" id="CHEBI:32364"/>
    </ligand>
</feature>
<feature type="binding site" evidence="1">
    <location>
        <position position="236"/>
    </location>
    <ligand>
        <name>3-dehydroquinate</name>
        <dbReference type="ChEBI" id="CHEBI:32364"/>
    </ligand>
</feature>
<evidence type="ECO:0000255" key="1">
    <source>
        <dbReference type="HAMAP-Rule" id="MF_00214"/>
    </source>
</evidence>
<reference key="1">
    <citation type="journal article" date="2007" name="J. Bacteriol.">
        <title>The genome sequence of avian pathogenic Escherichia coli strain O1:K1:H7 shares strong similarities with human extraintestinal pathogenic E. coli genomes.</title>
        <authorList>
            <person name="Johnson T.J."/>
            <person name="Kariyawasam S."/>
            <person name="Wannemuehler Y."/>
            <person name="Mangiamele P."/>
            <person name="Johnson S.J."/>
            <person name="Doetkott C."/>
            <person name="Skyberg J.A."/>
            <person name="Lynne A.M."/>
            <person name="Johnson J.R."/>
            <person name="Nolan L.K."/>
        </authorList>
    </citation>
    <scope>NUCLEOTIDE SEQUENCE [LARGE SCALE GENOMIC DNA]</scope>
</reference>
<sequence>MKTVTVKDLVIGTGAPKIIVSLMAKDIASVKSEALAYREADFDILEWRVDHYADLSNVESVIAAAKILRETMPEKPLLFTFRSAKEGGEQAISTEAYIALNRAAIDSGLVDMIDLELFTGDDQVKETVAYAHAHDVKVVMSNHDFHKTPEAEEIIARLRKMQSFDADIPKIALMPQSTSDVLTLLAATLEMQEQYADRPIITMSMAKTGVISRLAGEVFGSAATFGAVKKASAPGQISVNDLRTVLTILHQA</sequence>
<comment type="function">
    <text evidence="1">Involved in the third step of the chorismate pathway, which leads to the biosynthesis of aromatic amino acids. Catalyzes the cis-dehydration of 3-dehydroquinate (DHQ) and introduces the first double bond of the aromatic ring to yield 3-dehydroshikimate.</text>
</comment>
<comment type="catalytic activity">
    <reaction evidence="1">
        <text>3-dehydroquinate = 3-dehydroshikimate + H2O</text>
        <dbReference type="Rhea" id="RHEA:21096"/>
        <dbReference type="ChEBI" id="CHEBI:15377"/>
        <dbReference type="ChEBI" id="CHEBI:16630"/>
        <dbReference type="ChEBI" id="CHEBI:32364"/>
        <dbReference type="EC" id="4.2.1.10"/>
    </reaction>
</comment>
<comment type="pathway">
    <text evidence="1">Metabolic intermediate biosynthesis; chorismate biosynthesis; chorismate from D-erythrose 4-phosphate and phosphoenolpyruvate: step 3/7.</text>
</comment>
<comment type="subunit">
    <text evidence="1">Homodimer.</text>
</comment>
<comment type="similarity">
    <text evidence="1">Belongs to the type-I 3-dehydroquinase family.</text>
</comment>
<proteinExistence type="inferred from homology"/>